<keyword id="KW-0113">Calvin cycle</keyword>
<keyword id="KW-0120">Carbon dioxide fixation</keyword>
<keyword id="KW-0150">Chloroplast</keyword>
<keyword id="KW-0456">Lyase</keyword>
<keyword id="KW-0460">Magnesium</keyword>
<keyword id="KW-0479">Metal-binding</keyword>
<keyword id="KW-0503">Monooxygenase</keyword>
<keyword id="KW-0560">Oxidoreductase</keyword>
<keyword id="KW-0601">Photorespiration</keyword>
<keyword id="KW-0602">Photosynthesis</keyword>
<keyword id="KW-0934">Plastid</keyword>
<keyword id="KW-0677">Repeat</keyword>
<dbReference type="EC" id="4.1.1.39"/>
<dbReference type="EMBL" id="AY169179">
    <property type="protein sequence ID" value="AAO13036.1"/>
    <property type="molecule type" value="mRNA"/>
</dbReference>
<dbReference type="EMBL" id="AY169169">
    <property type="protein sequence ID" value="AAO13026.1"/>
    <property type="molecule type" value="mRNA"/>
</dbReference>
<dbReference type="SMR" id="Q6Y9H0"/>
<dbReference type="GO" id="GO:0009507">
    <property type="term" value="C:chloroplast"/>
    <property type="evidence" value="ECO:0007669"/>
    <property type="project" value="UniProtKB-SubCell"/>
</dbReference>
<dbReference type="GO" id="GO:0000287">
    <property type="term" value="F:magnesium ion binding"/>
    <property type="evidence" value="ECO:0007669"/>
    <property type="project" value="InterPro"/>
</dbReference>
<dbReference type="GO" id="GO:0004497">
    <property type="term" value="F:monooxygenase activity"/>
    <property type="evidence" value="ECO:0007669"/>
    <property type="project" value="UniProtKB-KW"/>
</dbReference>
<dbReference type="GO" id="GO:0016984">
    <property type="term" value="F:ribulose-bisphosphate carboxylase activity"/>
    <property type="evidence" value="ECO:0007669"/>
    <property type="project" value="UniProtKB-EC"/>
</dbReference>
<dbReference type="GO" id="GO:0019253">
    <property type="term" value="P:reductive pentose-phosphate cycle"/>
    <property type="evidence" value="ECO:0007669"/>
    <property type="project" value="UniProtKB-KW"/>
</dbReference>
<dbReference type="CDD" id="cd08211">
    <property type="entry name" value="RuBisCO_large_II"/>
    <property type="match status" value="2"/>
</dbReference>
<dbReference type="Gene3D" id="3.20.20.110">
    <property type="entry name" value="Ribulose bisphosphate carboxylase, large subunit, C-terminal domain"/>
    <property type="match status" value="4"/>
</dbReference>
<dbReference type="Gene3D" id="3.30.70.150">
    <property type="entry name" value="RuBisCO large subunit, N-terminal domain"/>
    <property type="match status" value="3"/>
</dbReference>
<dbReference type="InterPro" id="IPR033966">
    <property type="entry name" value="RuBisCO"/>
</dbReference>
<dbReference type="InterPro" id="IPR020878">
    <property type="entry name" value="RuBisCo_large_chain_AS"/>
</dbReference>
<dbReference type="InterPro" id="IPR000685">
    <property type="entry name" value="RuBisCO_lsu_C"/>
</dbReference>
<dbReference type="InterPro" id="IPR036376">
    <property type="entry name" value="RuBisCO_lsu_C_sf"/>
</dbReference>
<dbReference type="InterPro" id="IPR017443">
    <property type="entry name" value="RuBisCO_lsu_fd_N"/>
</dbReference>
<dbReference type="InterPro" id="IPR036422">
    <property type="entry name" value="RuBisCO_lsu_N_sf"/>
</dbReference>
<dbReference type="InterPro" id="IPR020871">
    <property type="entry name" value="RuBisCO_lsuII"/>
</dbReference>
<dbReference type="NCBIfam" id="NF010002">
    <property type="entry name" value="PRK13475.1"/>
    <property type="match status" value="3"/>
</dbReference>
<dbReference type="PANTHER" id="PTHR42704">
    <property type="entry name" value="RIBULOSE BISPHOSPHATE CARBOXYLASE"/>
    <property type="match status" value="1"/>
</dbReference>
<dbReference type="PANTHER" id="PTHR42704:SF17">
    <property type="entry name" value="RIBULOSE BISPHOSPHATE CARBOXYLASE LARGE CHAIN"/>
    <property type="match status" value="1"/>
</dbReference>
<dbReference type="Pfam" id="PF00016">
    <property type="entry name" value="RuBisCO_large"/>
    <property type="match status" value="4"/>
</dbReference>
<dbReference type="Pfam" id="PF02788">
    <property type="entry name" value="RuBisCO_large_N"/>
    <property type="match status" value="3"/>
</dbReference>
<dbReference type="SUPFAM" id="SSF51649">
    <property type="entry name" value="RuBisCo, C-terminal domain"/>
    <property type="match status" value="4"/>
</dbReference>
<dbReference type="SUPFAM" id="SSF54966">
    <property type="entry name" value="RuBisCO, large subunit, small (N-terminal) domain"/>
    <property type="match status" value="3"/>
</dbReference>
<dbReference type="PROSITE" id="PS00157">
    <property type="entry name" value="RUBISCO_LARGE"/>
    <property type="match status" value="3"/>
</dbReference>
<name>RBL2_PROMN</name>
<feature type="chain" id="PRO_0000042971" description="Ribulose bisphosphate carboxylase 1" evidence="3">
    <location>
        <begin position="1" status="less than"/>
        <end position="196"/>
    </location>
</feature>
<feature type="propeptide" id="PRO_0000042972" description="Linker" evidence="3">
    <location>
        <begin position="197"/>
        <end position="217"/>
    </location>
</feature>
<feature type="chain" id="PRO_0000042973" description="Ribulose bisphosphate carboxylase 2" evidence="3">
    <location>
        <begin position="218"/>
        <end position="702"/>
    </location>
</feature>
<feature type="propeptide" id="PRO_0000042974" description="Linker" evidence="3">
    <location>
        <begin position="703"/>
        <end position="723"/>
    </location>
</feature>
<feature type="chain" id="PRO_0000042975" description="Ribulose bisphosphate carboxylase 3" evidence="3">
    <location>
        <begin position="724"/>
        <end position="1208"/>
    </location>
</feature>
<feature type="propeptide" id="PRO_0000042976" description="Linker" evidence="3">
    <location>
        <begin position="1209"/>
        <end position="1229"/>
    </location>
</feature>
<feature type="chain" id="PRO_0000042977" description="Ribulose bisphosphate carboxylase 4" evidence="3">
    <location>
        <begin position="1230"/>
        <end position="1563" status="greater than"/>
    </location>
</feature>
<feature type="active site" description="Proton acceptor" evidence="1">
    <location>
        <position position="383"/>
    </location>
</feature>
<feature type="active site" description="Proton acceptor" evidence="1">
    <location>
        <position position="504"/>
    </location>
</feature>
<feature type="active site" description="Proton acceptor" evidence="1">
    <location>
        <position position="889"/>
    </location>
</feature>
<feature type="active site" description="Proton acceptor" evidence="1">
    <location>
        <position position="1010"/>
    </location>
</feature>
<feature type="active site" description="Proton acceptor" evidence="1">
    <location>
        <position position="1395"/>
    </location>
</feature>
<feature type="active site" description="Proton acceptor" evidence="1">
    <location>
        <position position="1516"/>
    </location>
</feature>
<feature type="binding site" evidence="1">
    <location>
        <position position="32"/>
    </location>
    <ligand>
        <name>substrate</name>
    </ligand>
</feature>
<feature type="binding site" evidence="1">
    <location>
        <position position="79"/>
    </location>
    <ligand>
        <name>substrate</name>
    </ligand>
</feature>
<feature type="binding site" description="in homodimeric partner" evidence="1">
    <location>
        <position position="328"/>
    </location>
    <ligand>
        <name>substrate</name>
    </ligand>
</feature>
<feature type="binding site" evidence="1">
    <location>
        <position position="385"/>
    </location>
    <ligand>
        <name>substrate</name>
    </ligand>
</feature>
<feature type="binding site" description="via carbamate group" evidence="2">
    <location>
        <position position="408"/>
    </location>
    <ligand>
        <name>Mg(2+)</name>
        <dbReference type="ChEBI" id="CHEBI:18420"/>
    </ligand>
</feature>
<feature type="binding site" evidence="2">
    <location>
        <position position="410"/>
    </location>
    <ligand>
        <name>Mg(2+)</name>
        <dbReference type="ChEBI" id="CHEBI:18420"/>
    </ligand>
</feature>
<feature type="binding site" evidence="2">
    <location>
        <position position="411"/>
    </location>
    <ligand>
        <name>Mg(2+)</name>
        <dbReference type="ChEBI" id="CHEBI:18420"/>
    </ligand>
</feature>
<feature type="binding site" evidence="1">
    <location>
        <position position="505"/>
    </location>
    <ligand>
        <name>substrate</name>
    </ligand>
</feature>
<feature type="binding site" evidence="1">
    <location>
        <position position="538"/>
    </location>
    <ligand>
        <name>substrate</name>
    </ligand>
</feature>
<feature type="binding site" evidence="1">
    <location>
        <position position="585"/>
    </location>
    <ligand>
        <name>substrate</name>
    </ligand>
</feature>
<feature type="binding site" description="in homodimeric partner" evidence="1">
    <location>
        <position position="834"/>
    </location>
    <ligand>
        <name>substrate</name>
    </ligand>
</feature>
<feature type="binding site" evidence="1">
    <location>
        <position position="891"/>
    </location>
    <ligand>
        <name>substrate</name>
    </ligand>
</feature>
<feature type="binding site" description="via carbamate group" evidence="2">
    <location>
        <position position="914"/>
    </location>
    <ligand>
        <name>Mg(2+)</name>
        <dbReference type="ChEBI" id="CHEBI:18420"/>
    </ligand>
</feature>
<feature type="binding site" evidence="2">
    <location>
        <position position="916"/>
    </location>
    <ligand>
        <name>Mg(2+)</name>
        <dbReference type="ChEBI" id="CHEBI:18420"/>
    </ligand>
</feature>
<feature type="binding site" evidence="2">
    <location>
        <position position="917"/>
    </location>
    <ligand>
        <name>Mg(2+)</name>
        <dbReference type="ChEBI" id="CHEBI:18420"/>
    </ligand>
</feature>
<feature type="binding site" evidence="1">
    <location>
        <position position="1011"/>
    </location>
    <ligand>
        <name>substrate</name>
    </ligand>
</feature>
<feature type="binding site" evidence="1">
    <location>
        <position position="1044"/>
    </location>
    <ligand>
        <name>substrate</name>
    </ligand>
</feature>
<feature type="binding site" evidence="1">
    <location>
        <position position="1091"/>
    </location>
    <ligand>
        <name>substrate</name>
    </ligand>
</feature>
<feature type="binding site" description="in homodimeric partner" evidence="1">
    <location>
        <position position="1340"/>
    </location>
    <ligand>
        <name>substrate</name>
    </ligand>
</feature>
<feature type="binding site" evidence="1">
    <location>
        <position position="1397"/>
    </location>
    <ligand>
        <name>substrate</name>
    </ligand>
</feature>
<feature type="binding site" description="via carbamate group" evidence="2">
    <location>
        <position position="1420"/>
    </location>
    <ligand>
        <name>Mg(2+)</name>
        <dbReference type="ChEBI" id="CHEBI:18420"/>
    </ligand>
</feature>
<feature type="binding site" evidence="2">
    <location>
        <position position="1422"/>
    </location>
    <ligand>
        <name>Mg(2+)</name>
        <dbReference type="ChEBI" id="CHEBI:18420"/>
    </ligand>
</feature>
<feature type="binding site" evidence="2">
    <location>
        <position position="1423"/>
    </location>
    <ligand>
        <name>Mg(2+)</name>
        <dbReference type="ChEBI" id="CHEBI:18420"/>
    </ligand>
</feature>
<feature type="binding site" evidence="1">
    <location>
        <position position="1517"/>
    </location>
    <ligand>
        <name>substrate</name>
    </ligand>
</feature>
<feature type="binding site" evidence="1">
    <location>
        <position position="1550"/>
    </location>
    <ligand>
        <name>substrate</name>
    </ligand>
</feature>
<feature type="site" description="Transition state stabilizer" evidence="1">
    <location>
        <position position="40"/>
    </location>
</feature>
<feature type="site" description="Transition state stabilizer" evidence="1">
    <location>
        <position position="546"/>
    </location>
</feature>
<feature type="site" description="Transition state stabilizer" evidence="1">
    <location>
        <position position="1052"/>
    </location>
</feature>
<feature type="site" description="Transition state stabilizer" evidence="1">
    <location>
        <position position="1558"/>
    </location>
</feature>
<feature type="modified residue" description="N6-carboxylysine" evidence="2">
    <location>
        <position position="408"/>
    </location>
</feature>
<feature type="modified residue" description="N6-carboxylysine" evidence="2">
    <location>
        <position position="914"/>
    </location>
</feature>
<feature type="modified residue" description="N6-carboxylysine" evidence="2">
    <location>
        <position position="1420"/>
    </location>
</feature>
<feature type="sequence conflict" description="In Ref. 1; AAO13026." evidence="3" ref="1">
    <original>D</original>
    <variation>E</variation>
    <location>
        <position position="702"/>
    </location>
</feature>
<feature type="sequence conflict" description="In Ref. 1; AAO13026." evidence="3" ref="1">
    <original>TT</original>
    <variation>KA</variation>
    <location>
        <begin position="712"/>
        <end position="713"/>
    </location>
</feature>
<feature type="sequence conflict" description="In Ref. 1; AAO13026." evidence="3" ref="1">
    <original>A</original>
    <variation>T</variation>
    <location>
        <position position="720"/>
    </location>
</feature>
<feature type="sequence conflict" description="In Ref. 1; AAO13026." evidence="3" ref="1">
    <original>D</original>
    <variation>E</variation>
    <location>
        <position position="1208"/>
    </location>
</feature>
<feature type="sequence conflict" description="In Ref. 1; AAO13026." evidence="3" ref="1">
    <original>TTRK</original>
    <variation>KART</variation>
    <location>
        <begin position="1218"/>
        <end position="1221"/>
    </location>
</feature>
<feature type="sequence conflict" description="In Ref. 1; AAO13026." evidence="3" ref="1">
    <original>A</original>
    <variation>T</variation>
    <location>
        <position position="1226"/>
    </location>
</feature>
<feature type="non-terminal residue">
    <location>
        <position position="1"/>
    </location>
</feature>
<feature type="non-terminal residue">
    <location>
        <position position="1563"/>
    </location>
</feature>
<organism>
    <name type="scientific">Prorocentrum minimum</name>
    <name type="common">Dinoflagellate</name>
    <name type="synonym">Exuviaella minima</name>
    <dbReference type="NCBI Taxonomy" id="39449"/>
    <lineage>
        <taxon>Eukaryota</taxon>
        <taxon>Sar</taxon>
        <taxon>Alveolata</taxon>
        <taxon>Dinophyceae</taxon>
        <taxon>Prorocentrales</taxon>
        <taxon>Prorocentraceae</taxon>
        <taxon>Prorocentrum</taxon>
    </lineage>
</organism>
<evidence type="ECO:0000250" key="1"/>
<evidence type="ECO:0000255" key="2">
    <source>
        <dbReference type="PROSITE-ProRule" id="PRU10114"/>
    </source>
</evidence>
<evidence type="ECO:0000305" key="3"/>
<gene>
    <name type="primary">rbcL</name>
</gene>
<reference key="1">
    <citation type="journal article" date="2003" name="J. Phycol.">
        <title>Complex gene structure of the form II Rubisco in the dinoflagellate Prorocentrum minimum (Dinophyceae).</title>
        <authorList>
            <person name="Zhang H."/>
            <person name="Lin S."/>
        </authorList>
    </citation>
    <scope>NUCLEOTIDE SEQUENCE [MRNA]</scope>
    <scope>GENE COPY</scope>
    <scope>DETECTION OF PROTEIN</scope>
    <source>
        <strain>CCMP696 / 1PM</strain>
    </source>
</reference>
<comment type="function">
    <text evidence="1">RuBisCO catalyzes two reactions: the carboxylation of D-ribulose 1,5-bisphosphate, the primary event in carbon dioxide fixation, as well as the oxidative fragmentation of the pentose substrate. Both reactions occur simultaneously and in competition at the same active site (By similarity).</text>
</comment>
<comment type="catalytic activity">
    <reaction>
        <text>2 (2R)-3-phosphoglycerate + 2 H(+) = D-ribulose 1,5-bisphosphate + CO2 + H2O</text>
        <dbReference type="Rhea" id="RHEA:23124"/>
        <dbReference type="ChEBI" id="CHEBI:15377"/>
        <dbReference type="ChEBI" id="CHEBI:15378"/>
        <dbReference type="ChEBI" id="CHEBI:16526"/>
        <dbReference type="ChEBI" id="CHEBI:57870"/>
        <dbReference type="ChEBI" id="CHEBI:58272"/>
        <dbReference type="EC" id="4.1.1.39"/>
    </reaction>
</comment>
<comment type="catalytic activity">
    <reaction>
        <text>D-ribulose 1,5-bisphosphate + O2 = 2-phosphoglycolate + (2R)-3-phosphoglycerate + 2 H(+)</text>
        <dbReference type="Rhea" id="RHEA:36631"/>
        <dbReference type="ChEBI" id="CHEBI:15378"/>
        <dbReference type="ChEBI" id="CHEBI:15379"/>
        <dbReference type="ChEBI" id="CHEBI:57870"/>
        <dbReference type="ChEBI" id="CHEBI:58033"/>
        <dbReference type="ChEBI" id="CHEBI:58272"/>
    </reaction>
</comment>
<comment type="cofactor">
    <cofactor evidence="1">
        <name>Mg(2+)</name>
        <dbReference type="ChEBI" id="CHEBI:18420"/>
    </cofactor>
    <text evidence="1">Binds 1 Mg(2+) ion per subunit.</text>
</comment>
<comment type="subunit">
    <text evidence="1">Homodimer.</text>
</comment>
<comment type="subcellular location">
    <subcellularLocation>
        <location evidence="3">Plastid</location>
        <location evidence="3">Chloroplast</location>
    </subcellularLocation>
    <text>In this organism the plastid is the result of a secondary endosymbiosis event, and thus is found within the endomembrane system, necessitating a complex targeting process.</text>
</comment>
<comment type="PTM">
    <text>In Western blots an approximately 220 kDa polyprotein and 2 smaller proteins of about 55 and 52 kDa are detected, suggesting the polyprotein may be cleaved at one end of the linker and then at the other end to give mature RuBisCO.</text>
</comment>
<comment type="miscellaneous">
    <text evidence="1">The basic functional RuBisCO is composed of a large chain homodimer in a 'head-to-tail' conformation. In contrast to form I RuBisCO, the form II RuBisCO are composed solely of large subunits (By similarity).</text>
</comment>
<comment type="miscellaneous">
    <text>Synthesized as an approximately 220 kDa polyprotein, imported into chloroplasts and subsequently cleaved into 4 mature RuBisCO proteins. Only the 2 middle RuBisCO copies are complete in this entry. There are estimated to be at least 10 copies of this polyprotein gene.</text>
</comment>
<comment type="miscellaneous">
    <text evidence="1">This may be first cotranslationally imported into the ER up to a stop-transfer signal, so that the N-terminal region of the transit peptide is in the lumen of the ER while the rest of the protein remains in the cytoplasm. Maintaining this topology, proteins are directed to the Golgi and sorted into vesicles that will fuse with the outermost plastid membrane, exposing the transit peptide to the Toc/Tic apparatus, which draws the entire protein across the remaining membranes (By similarity).</text>
</comment>
<comment type="similarity">
    <text evidence="3">Belongs to the RuBisCO large chain family. Type II subfamily.</text>
</comment>
<comment type="caution">
    <text evidence="3">Note that unlike other eukaryotes, peridinin-containing dinoflagellates have a nuclear-encoded chloroplast-targeted form II RuBisCO.</text>
</comment>
<protein>
    <recommendedName>
        <fullName>Ribulose bisphosphate carboxylase</fullName>
        <shortName>RuBisCO</shortName>
        <ecNumber>4.1.1.39</ecNumber>
    </recommendedName>
    <component>
        <recommendedName>
            <fullName>Ribulose bisphosphate carboxylase 1</fullName>
        </recommendedName>
    </component>
    <component>
        <recommendedName>
            <fullName>Ribulose bisphosphate carboxylase 2</fullName>
        </recommendedName>
    </component>
    <component>
        <recommendedName>
            <fullName>Ribulose bisphosphate carboxylase 3</fullName>
        </recommendedName>
    </component>
    <component>
        <recommendedName>
            <fullName>Ribulose bisphosphate carboxylase 4</fullName>
        </recommendedName>
    </component>
</protein>
<proteinExistence type="evidence at transcript level"/>
<sequence length="1563" mass="169955">GHGAVTSPQTQRGYTAFVHTKLSRVIGASGIHTGTMSFGKMEGDASDKNIGFMLQDDVADGPYYRQEWEGMKQTTPIISGGMNALRLPAFFENLGHSNVILTAGGGAFGHKDGPKQGAISCAQGEESWKLWKAGTYGDVSLSDGVVEYAKTHEELKGAFLTFQKDADQIYPGWKEKLGYTGESSVQAASFNWQKKDLAAAFVGASTTRKASSVARRALDQSSRYADLSLTEEDLIKNGQHVLVAYIMKPKAGYDYLATAAHFAAESSTGTNVNVCTTDDFTKTVDALVYYIDPENEEMKIAYPTALFDRNITDGRAMMCSVLTLSIGNNQGMGDVDYGKIYDIYFPPQYLRLFDGPSCCVIDMWRILGRGTVGGGLVVGTIIKPKLGLQPKPFGQACYGFWQGGDFIKNDEPQGNQTFCQMNECIPEVVKAMRAAQEETGQGKLFSANITADDPNEMIARAKYILNQMGPMAENCAFLVDGYVAGGTAVTVARRNFPKQFLHYHRAGHGAVTSPQTQRGYTAFVHTKLSRVIGASGIHTGTMSFGKMEGDASDKNIGFMLQDDVADGPYYRQEWEGMKQTTPIISGGMNALRLPAFFENLGHSNVILTAGGGAFGHKDGPKQGAISCAQGEESWKLWKAGTYGDVSLSDGVVEYAKTHEELKGAFLTFQKDADQIYPGWKEKLGYTGESSVQAASFNWQKKDLAAAFVGASTTRKASSVARRALDQSSRYADLSLTEEDLIKNGQHVLVAYIMKPKAGYDYLATAAHFAAESSTGTNVNVCTTDDFTKTVDALVYYIDPENEEMKIAYPTALFDRNITDGRAMMCSVLTLSIGNNQGMGDVDYGKIYDIYFPPQYLRLFDGPSCCVIDMWRILGRGTVGGGLVVGTIIKPKLGLQPKPFGQACYGFWQGGDFIKNDEPQGNQTFCQMNECIPEVVKAMRAAQEETGQGKLFSANITADDPNEMIARAKYILNQMGPMAENCAFLVDGYVAGGTAVTVARRNFPKQFLHYHRAGHGAVTSPQTQRGYTAFVHTKLSRVIGASGIHTGTMSFGKMEGDASDKNIGFMLQDDVADGPYYRQEWEGMKQTTPIISGGMNALRLPAFFENLGHSNVILTAGGGAFGHKDGPKQGAISCAQGEESWKLWKAGTYGDVSLSDGVVEYAKTHEELKGAFLTFQKDADQIYPGWKEKLGYTGESSVQAASFNWQKKDLAAAFVGASTTRKASSVARRALDQSSRYADLSLTEEDLIKNGQHVLVAYIMKPKAGYDYLATAAHFAAESSTGTNVNVCTTDDFTKTVDALVYYIDPENEEMKIAYPTALFDRNITDGRAMMCSVLTLSIGNNQGMGDVDYGKIYDIYFPPQYLRLFDGPSCCVIDMWRILGRGTVGGGLVVGTIIKPKLGLQPKPFGQACYGFWQGGDFIKNDEPQGNQTFCQMNECIPEVVKAMRAAQEETGQGKLFSANITADDPNEMIARAKYILNQMGPMAENCAFLVDGYVAGGTAVTVARRNFPKQFLHYHRAGHGAVTSPQTQRGYTAFVHTKLSRVIGASGIHTGTMSFGKMEGDA</sequence>
<accession>Q6Y9H0</accession>
<accession>Q6Y9I0</accession>